<accession>P73048</accession>
<reference evidence="15" key="1">
    <citation type="journal article" date="1996" name="DNA Res.">
        <title>Sequence analysis of the genome of the unicellular cyanobacterium Synechocystis sp. strain PCC6803. II. Sequence determination of the entire genome and assignment of potential protein-coding regions.</title>
        <authorList>
            <person name="Kaneko T."/>
            <person name="Sato S."/>
            <person name="Kotani H."/>
            <person name="Tanaka A."/>
            <person name="Asamizu E."/>
            <person name="Nakamura Y."/>
            <person name="Miyajima N."/>
            <person name="Hirosawa M."/>
            <person name="Sugiura M."/>
            <person name="Sasamoto S."/>
            <person name="Kimura T."/>
            <person name="Hosouchi T."/>
            <person name="Matsuno A."/>
            <person name="Muraki A."/>
            <person name="Nakazaki N."/>
            <person name="Naruo K."/>
            <person name="Okumura S."/>
            <person name="Shimpo S."/>
            <person name="Takeuchi C."/>
            <person name="Wada T."/>
            <person name="Watanabe A."/>
            <person name="Yamada M."/>
            <person name="Yasuda M."/>
            <person name="Tabata S."/>
        </authorList>
    </citation>
    <scope>NUCLEOTIDE SEQUENCE [LARGE SCALE GENOMIC DNA]</scope>
    <source>
        <strain>ATCC 27184 / PCC 6803 / Kazusa</strain>
    </source>
</reference>
<reference key="2">
    <citation type="journal article" date="2008" name="Anal. Biochem.">
        <title>A method for analyzing lipid-modified proteins with mass spectrometry.</title>
        <authorList>
            <person name="Ujihara T."/>
            <person name="Sakurai I."/>
            <person name="Mizusawa N."/>
            <person name="Wada H."/>
        </authorList>
    </citation>
    <scope>PROTEIN SEQUENCE OF 22-29</scope>
    <scope>DIACYLGLYCEROL AT CYS-22</scope>
    <scope>PALMITOYLATION AT CYS-22</scope>
    <scope>N-TERMINAL LIPIDATION</scope>
    <scope>EXPRESSION IN E.COLI</scope>
    <source>
        <strain>ATCC 27184 / PCC 6803 / Kazusa</strain>
    </source>
</reference>
<reference key="3">
    <citation type="journal article" date="2014" name="Proc. Natl. Acad. Sci. U.S.A.">
        <title>MS-based cross-linking analysis reveals the location of the PsbQ protein in cyanobacterial photosystem II.</title>
        <authorList>
            <person name="Liu H."/>
            <person name="Zhang H."/>
            <person name="Weisz D.A."/>
            <person name="Vidavsky I."/>
            <person name="Gross M.L."/>
            <person name="Pakrasi H.B."/>
        </authorList>
    </citation>
    <scope>PROTEIN SEQUENCE OF 101-106 AND 115-122</scope>
    <scope>SUBUNIT</scope>
    <scope>SUBCELLULAR LOCATION</scope>
    <scope>DISRUPTION PHENOTYPE</scope>
    <source>
        <strain>ATCC 27184 / PCC 6803 / Kazusa</strain>
    </source>
</reference>
<reference key="4">
    <citation type="journal article" date="2002" name="Biochemistry">
        <title>Proteomic analysis of a highly active photosystem II preparation from the cyanobacterium Synechocystis sp. PCC 6803 reveals the presence of novel polypeptides.</title>
        <authorList>
            <person name="Kashino Y."/>
            <person name="Lauber W.M."/>
            <person name="Carroll J.A."/>
            <person name="Wang Q."/>
            <person name="Whitmarsh J."/>
            <person name="Satoh K."/>
            <person name="Pakrasi H.B."/>
        </authorList>
    </citation>
    <scope>IDENTIFICATION BY MASS SPECTROMETRY</scope>
    <scope>SUBUNIT</scope>
    <scope>SUBCELLULAR LOCATION</scope>
    <source>
        <strain>ATCC 27184 / PCC 6803 / Kazusa</strain>
    </source>
</reference>
<reference key="5">
    <citation type="journal article" date="2004" name="Plant Cell">
        <title>Homologs of plant PsbP and PsbQ proteins are necessary for regulation of photosystem II activity in the cyanobacterium Synechocystis 6803.</title>
        <authorList>
            <person name="Thornton L.E."/>
            <person name="Ohkawa H."/>
            <person name="Roose J.L."/>
            <person name="Kashino Y."/>
            <person name="Keren N."/>
            <person name="Pakrasi H.B."/>
        </authorList>
    </citation>
    <scope>FUNCTION</scope>
    <scope>SUBUNIT</scope>
    <scope>SUBCELLULAR LOCATION</scope>
    <scope>DISRUPTION PHENOTYPE</scope>
    <source>
        <strain>ATCC 27184 / PCC 6803 / Kazusa</strain>
    </source>
</reference>
<reference key="6">
    <citation type="journal article" date="2005" name="Biochemistry">
        <title>PsbQ (Sll1638) in Synechocystis sp. PCC 6803 is required for photosystem II activity in specific mutants and in nutrient-limiting conditions.</title>
        <authorList>
            <person name="Summerfield T.C."/>
            <person name="Shand J.A."/>
            <person name="Bentley F.K."/>
            <person name="Eaton-Rye J.J."/>
        </authorList>
    </citation>
    <scope>INDUCTION</scope>
    <scope>DISRUPTION PHENOTYPE</scope>
    <source>
        <strain>ATCC 27184 / PCC 6803 / Kazusa</strain>
    </source>
</reference>
<reference key="7">
    <citation type="journal article" date="2007" name="Proc. Natl. Acad. Sci. U.S.A.">
        <title>The PsbQ protein defines cyanobacterial Photosystem II complexes with highest activity and stability.</title>
        <authorList>
            <person name="Roose J.L."/>
            <person name="Kashino Y."/>
            <person name="Pakrasi H.B."/>
        </authorList>
    </citation>
    <scope>FUNCTION</scope>
    <scope>SUBUNIT</scope>
    <scope>SUBCELLULAR LOCATION</scope>
    <scope>BIOTECHNOLOGY</scope>
    <source>
        <strain>ATCC 27184 / PCC 6803 / Kazusa</strain>
    </source>
</reference>
<reference evidence="16 17" key="8">
    <citation type="journal article" date="2010" name="Biochemistry">
        <title>Crystal structure of PsbQ from Synechocystis sp. PCC 6803 at 1.8 A: implications for binding and function in cyanobacterial photosystem II.</title>
        <authorList>
            <person name="Jackson S.A."/>
            <person name="Fagerlund R.D."/>
            <person name="Wilbanks S.M."/>
            <person name="Eaton-Rye J.J."/>
        </authorList>
    </citation>
    <scope>X-RAY CRYSTALLOGRAPHY (1.80 ANGSTROMS) OF 21-149</scope>
    <source>
        <strain>ATCC 27184 / PCC 6803 / Kazusa</strain>
    </source>
</reference>
<reference evidence="18 19" key="9">
    <citation type="journal article" date="2022" name="Proc. Natl. Acad. Sci. U.S.A.">
        <title>High-resolution cryo-electron microscopy structure of photosystem II from the mesophilic cyanobacterium, Synechocystis sp. PCC 6803.</title>
        <authorList>
            <person name="Gisriel C.J."/>
            <person name="Wang J."/>
            <person name="Liu J."/>
            <person name="Flesher D.A."/>
            <person name="Reiss K.M."/>
            <person name="Huang H.L."/>
            <person name="Yang K.R."/>
            <person name="Armstrong W.H."/>
            <person name="Gunner M.R."/>
            <person name="Batista V.S."/>
            <person name="Debus R.J."/>
            <person name="Brudvig G.W."/>
        </authorList>
    </citation>
    <scope>STRUCTURE BY ELECTRON MICROSCOPY (1.93 ANGSTROMS) OF 29-147</scope>
    <scope>FUNCTION</scope>
    <scope>SUBUNIT</scope>
    <scope>SUBCELLULAR LOCATION</scope>
    <source>
        <strain>ATCC 27184 / PCC 6803 / Kazusa</strain>
    </source>
</reference>
<name>PSBQ_SYNY3</name>
<organism>
    <name type="scientific">Synechocystis sp. (strain ATCC 27184 / PCC 6803 / Kazusa)</name>
    <dbReference type="NCBI Taxonomy" id="1111708"/>
    <lineage>
        <taxon>Bacteria</taxon>
        <taxon>Bacillati</taxon>
        <taxon>Cyanobacteriota</taxon>
        <taxon>Cyanophyceae</taxon>
        <taxon>Synechococcales</taxon>
        <taxon>Merismopediaceae</taxon>
        <taxon>Synechocystis</taxon>
    </lineage>
</organism>
<dbReference type="EMBL" id="BA000022">
    <property type="protein sequence ID" value="BAA17069.1"/>
    <property type="molecule type" value="Genomic_DNA"/>
</dbReference>
<dbReference type="PIR" id="S75155">
    <property type="entry name" value="S75155"/>
</dbReference>
<dbReference type="PDB" id="3LS0">
    <property type="method" value="X-ray"/>
    <property type="resolution" value="1.80 A"/>
    <property type="chains" value="A=21-149"/>
</dbReference>
<dbReference type="PDB" id="3LS1">
    <property type="method" value="X-ray"/>
    <property type="resolution" value="1.85 A"/>
    <property type="chains" value="A/B=21-149"/>
</dbReference>
<dbReference type="PDB" id="7N8O">
    <property type="method" value="EM"/>
    <property type="resolution" value="1.93 A"/>
    <property type="chains" value="Q/q=29-147"/>
</dbReference>
<dbReference type="PDB" id="7RCV">
    <property type="method" value="EM"/>
    <property type="resolution" value="2.01 A"/>
    <property type="chains" value="Q/q=29-147"/>
</dbReference>
<dbReference type="PDB" id="8TOW">
    <property type="method" value="EM"/>
    <property type="resolution" value="2.14 A"/>
    <property type="chains" value="Q/q=1-149"/>
</dbReference>
<dbReference type="PDB" id="9EH5">
    <property type="method" value="EM"/>
    <property type="resolution" value="1.97 A"/>
    <property type="chains" value="Q/q=1-149"/>
</dbReference>
<dbReference type="PDBsum" id="3LS0"/>
<dbReference type="PDBsum" id="3LS1"/>
<dbReference type="PDBsum" id="7N8O"/>
<dbReference type="PDBsum" id="7RCV"/>
<dbReference type="PDBsum" id="8TOW"/>
<dbReference type="PDBsum" id="9EH5"/>
<dbReference type="EMDB" id="EMD-24239"/>
<dbReference type="EMDB" id="EMD-24407"/>
<dbReference type="EMDB" id="EMD-41460"/>
<dbReference type="EMDB" id="EMD-48046"/>
<dbReference type="SMR" id="P73048"/>
<dbReference type="IntAct" id="P73048">
    <property type="interactions" value="2"/>
</dbReference>
<dbReference type="STRING" id="1148.gene:10497930"/>
<dbReference type="PaxDb" id="1148-1652145"/>
<dbReference type="EnsemblBacteria" id="BAA17069">
    <property type="protein sequence ID" value="BAA17069"/>
    <property type="gene ID" value="BAA17069"/>
</dbReference>
<dbReference type="KEGG" id="syn:sll1638"/>
<dbReference type="eggNOG" id="ENOG5032TF7">
    <property type="taxonomic scope" value="Bacteria"/>
</dbReference>
<dbReference type="InParanoid" id="P73048"/>
<dbReference type="EvolutionaryTrace" id="P73048"/>
<dbReference type="Proteomes" id="UP000001425">
    <property type="component" value="Chromosome"/>
</dbReference>
<dbReference type="GO" id="GO:0019898">
    <property type="term" value="C:extrinsic component of membrane"/>
    <property type="evidence" value="ECO:0007669"/>
    <property type="project" value="InterPro"/>
</dbReference>
<dbReference type="GO" id="GO:0009654">
    <property type="term" value="C:photosystem II oxygen evolving complex"/>
    <property type="evidence" value="ECO:0007669"/>
    <property type="project" value="InterPro"/>
</dbReference>
<dbReference type="GO" id="GO:0031676">
    <property type="term" value="C:plasma membrane-derived thylakoid membrane"/>
    <property type="evidence" value="ECO:0007669"/>
    <property type="project" value="UniProtKB-SubCell"/>
</dbReference>
<dbReference type="GO" id="GO:0030096">
    <property type="term" value="C:plasma membrane-derived thylakoid photosystem II"/>
    <property type="evidence" value="ECO:0000314"/>
    <property type="project" value="UniProtKB"/>
</dbReference>
<dbReference type="GO" id="GO:0005509">
    <property type="term" value="F:calcium ion binding"/>
    <property type="evidence" value="ECO:0007669"/>
    <property type="project" value="InterPro"/>
</dbReference>
<dbReference type="GO" id="GO:0015979">
    <property type="term" value="P:photosynthesis"/>
    <property type="evidence" value="ECO:0007669"/>
    <property type="project" value="UniProtKB-KW"/>
</dbReference>
<dbReference type="Gene3D" id="1.20.120.290">
    <property type="entry name" value="Oxygen-evolving enhancer protein 3 (PsbQ), four-helix up-down bundle"/>
    <property type="match status" value="1"/>
</dbReference>
<dbReference type="InterPro" id="IPR023222">
    <property type="entry name" value="PsbQ-like_dom_sf"/>
</dbReference>
<dbReference type="InterPro" id="IPR008797">
    <property type="entry name" value="PSII_PsbQ"/>
</dbReference>
<dbReference type="InterPro" id="IPR017487">
    <property type="entry name" value="PSII_PsbQ_cyanobac"/>
</dbReference>
<dbReference type="NCBIfam" id="TIGR03042">
    <property type="entry name" value="PS_II_psbQ_bact"/>
    <property type="match status" value="1"/>
</dbReference>
<dbReference type="Pfam" id="PF05757">
    <property type="entry name" value="PsbQ"/>
    <property type="match status" value="1"/>
</dbReference>
<dbReference type="SUPFAM" id="SSF101112">
    <property type="entry name" value="Oxygen-evolving enhancer protein 3"/>
    <property type="match status" value="1"/>
</dbReference>
<dbReference type="PROSITE" id="PS51257">
    <property type="entry name" value="PROKAR_LIPOPROTEIN"/>
    <property type="match status" value="1"/>
</dbReference>
<sequence>MSRLRSLLSLILVLVTTVLVSCSSPQVEIPTTYSPEKIAQLQVYVNPIAVARDGMEKRLQGLIADQNWVDTQTYIHGPLGQLRRDMLGLASSLLPKDQDKAKTLAKEVFGHLERLDAAAKDRNGSQAKIQYQEALADFDSFLNLLPQAS</sequence>
<protein>
    <recommendedName>
        <fullName evidence="11">CyanoQ</fullName>
    </recommendedName>
    <alternativeName>
        <fullName evidence="12">Photosystem II lipoprotein PsbQ</fullName>
    </alternativeName>
</protein>
<gene>
    <name evidence="10" type="primary">psbQ</name>
    <name evidence="15" type="ordered locus">sll1638</name>
</gene>
<comment type="function">
    <text evidence="3 5 8">One of the extrinsic, lumenal subunits of photosystem II (PSII), which stabilize and protect the oxygen-evolving complex. PSII is a light-driven water plastoquinone oxidoreductase, using light energy to abstract electrons from H(2)O, generating a proton gradient subsequently used for ATP formation. Plays a role in the stability of the oxygen-evolving center on the luminal side of PSII (PubMed:17287351). Required for optimal photoautotrophic growth in the absence of Ca(2+) or Cl(-), functions in optimizing PSII water oxidation/O(2) evolving activity (PubMed:15258264). Requires PsbO to bind to PSII (PubMed:24550459).</text>
</comment>
<comment type="subunit">
    <text evidence="2 3 5 8">PSII is composed of 1 copy each of membrane proteins PsbA, PsbB, PsbC, PsbD, PsbE, PsbF, PsbH, PsbI, PsbJ, PsbK, PsbL, PsbM, PsbT, PsbX, PsbY, PsbZ, Psb30/Ycf12, peripheral proteins PsbO, CyanoQ (PsbQ), PsbU, PsbV and a large number of cofactors. It forms dimeric complexes (PubMed:12069591, PubMed:15258264, PubMed:17287351, PubMed:24550459). Pull-down experiments with His-tagged PsbQ pull down dimeric, but not monomeric, PSII (PubMed:24550459).</text>
</comment>
<comment type="subcellular location">
    <subcellularLocation>
        <location evidence="1 2 3 5 8">Cellular thylakoid membrane</location>
        <topology evidence="1 13 14">Lipid-anchor</topology>
        <orientation evidence="8 9">Lumenal side</orientation>
    </subcellularLocation>
    <text evidence="8 9">Associated with PSII at the lumenal side of the thylakoid membrane, binds to the large lumenal domain of PsbC (CP43) between PsbO and PsbV (PubMed:34937700). Contacts CP47 (psbB) and PsbO (PubMed:24550459).</text>
</comment>
<comment type="induction">
    <text evidence="4">Transcribed constitutively under all conditions tested.</text>
</comment>
<comment type="PTM">
    <text evidence="2 6">The N-terminus is blocked (PubMed:12069591). Upon expression in E.coli the N-terminus is modified with a diacylglycerol and an acyl group bound to two palmitates and one palmitoleate (PubMed:18078799).</text>
</comment>
<comment type="disruption phenotype">
    <text evidence="3 4 8">Wild-type growth in BG11 medium, at 30 degrees Celsius with 30 umol photons/m(2)/s; slightly reduced growth in Ca(2+) or Cl(-) depleted medium. Up to 60% decreased rates of O(2) evolution (PubMed:15258264). Wild-type growth in BG11 medium, at 30 degrees Celsius with 25 umol photons/m(2)/s, wild-type growth under Ca(2+), Cl(-) or iron-limiting conditions, about 10% decrease in O(2) evolution rate; slightly slower growth in double psbO-psbQ or psbQ-psbU mutants, no growth of psbQ-psbV mutants (PubMed:15641809). Increased accumulation of intermediate assembly forms of PSII (PubMed:24550459).</text>
</comment>
<comment type="biotechnology">
    <text evidence="5">Addition of an 8-His tag to the C-terminus of this protein allows purification of intact photosystem II (PSII) on a Ni(2+) affinity column. PSII purified this way has more PsbV and a higher Mn content (reflecting presence of the oxygen evolving complex) than PSII purified via His tagged-PsbB on Ni(2+) affinity columns, and has more O(2) evolving activity.</text>
</comment>
<comment type="miscellaneous">
    <text evidence="7">When crystallized in the presence of Zn(2+) this protein dimerizes, but neither Zn-binding nor dimerization are thought to be physiologically relevant.</text>
</comment>
<comment type="similarity">
    <text evidence="12">Belongs to the PsbQ family. CyanoQ subfamily.</text>
</comment>
<proteinExistence type="evidence at protein level"/>
<keyword id="KW-0002">3D-structure</keyword>
<keyword id="KW-0903">Direct protein sequencing</keyword>
<keyword id="KW-0449">Lipoprotein</keyword>
<keyword id="KW-0472">Membrane</keyword>
<keyword id="KW-0479">Metal-binding</keyword>
<keyword id="KW-0564">Palmitate</keyword>
<keyword id="KW-0602">Photosynthesis</keyword>
<keyword id="KW-0604">Photosystem II</keyword>
<keyword id="KW-1185">Reference proteome</keyword>
<keyword id="KW-0732">Signal</keyword>
<keyword id="KW-0793">Thylakoid</keyword>
<evidence type="ECO:0000255" key="1">
    <source>
        <dbReference type="PROSITE-ProRule" id="PRU00303"/>
    </source>
</evidence>
<evidence type="ECO:0000269" key="2">
    <source>
    </source>
</evidence>
<evidence type="ECO:0000269" key="3">
    <source>
    </source>
</evidence>
<evidence type="ECO:0000269" key="4">
    <source>
    </source>
</evidence>
<evidence type="ECO:0000269" key="5">
    <source>
    </source>
</evidence>
<evidence type="ECO:0000269" key="6">
    <source>
    </source>
</evidence>
<evidence type="ECO:0000269" key="7">
    <source>
    </source>
</evidence>
<evidence type="ECO:0000269" key="8">
    <source>
    </source>
</evidence>
<evidence type="ECO:0000269" key="9">
    <source>
    </source>
</evidence>
<evidence type="ECO:0000303" key="10">
    <source>
    </source>
</evidence>
<evidence type="ECO:0000303" key="11">
    <source>
    </source>
</evidence>
<evidence type="ECO:0000305" key="12"/>
<evidence type="ECO:0000305" key="13">
    <source>
    </source>
</evidence>
<evidence type="ECO:0000305" key="14">
    <source>
    </source>
</evidence>
<evidence type="ECO:0000312" key="15">
    <source>
        <dbReference type="EMBL" id="BAA17069.1"/>
    </source>
</evidence>
<evidence type="ECO:0007744" key="16">
    <source>
        <dbReference type="PDB" id="3LS0"/>
    </source>
</evidence>
<evidence type="ECO:0007744" key="17">
    <source>
        <dbReference type="PDB" id="3LS1"/>
    </source>
</evidence>
<evidence type="ECO:0007744" key="18">
    <source>
        <dbReference type="PDB" id="7N8O"/>
    </source>
</evidence>
<evidence type="ECO:0007744" key="19">
    <source>
        <dbReference type="PDB" id="7RCV"/>
    </source>
</evidence>
<evidence type="ECO:0007829" key="20">
    <source>
        <dbReference type="PDB" id="3LS0"/>
    </source>
</evidence>
<evidence type="ECO:0007829" key="21">
    <source>
        <dbReference type="PDB" id="3LS1"/>
    </source>
</evidence>
<feature type="signal peptide" evidence="1 13">
    <location>
        <begin position="1"/>
        <end position="21"/>
    </location>
</feature>
<feature type="chain" id="PRO_0000458868" description="CyanoQ" evidence="1">
    <location>
        <begin position="22"/>
        <end position="149"/>
    </location>
</feature>
<feature type="lipid moiety-binding region" description="N-palmitoyl cysteine" evidence="1 13">
    <location>
        <position position="22"/>
    </location>
</feature>
<feature type="lipid moiety-binding region" description="S-diacylglycerol cysteine" evidence="1 13">
    <location>
        <position position="22"/>
    </location>
</feature>
<feature type="helix" evidence="20">
    <location>
        <begin position="35"/>
        <end position="57"/>
    </location>
</feature>
<feature type="helix" evidence="20">
    <location>
        <begin position="59"/>
        <end position="64"/>
    </location>
</feature>
<feature type="helix" evidence="20">
    <location>
        <begin position="68"/>
        <end position="76"/>
    </location>
</feature>
<feature type="turn" evidence="20">
    <location>
        <begin position="77"/>
        <end position="81"/>
    </location>
</feature>
<feature type="helix" evidence="20">
    <location>
        <begin position="82"/>
        <end position="92"/>
    </location>
</feature>
<feature type="helix" evidence="20">
    <location>
        <begin position="95"/>
        <end position="120"/>
    </location>
</feature>
<feature type="helix" evidence="20">
    <location>
        <begin position="124"/>
        <end position="144"/>
    </location>
</feature>
<feature type="helix" evidence="21">
    <location>
        <begin position="146"/>
        <end position="148"/>
    </location>
</feature>